<reference key="1">
    <citation type="submission" date="2003-05" db="EMBL/GenBank/DDBJ databases">
        <title>Polymorphism detected in the yeast ORF YGR161C.</title>
        <authorList>
            <person name="Reis V.C.B."/>
            <person name="Torres F.A.G."/>
        </authorList>
    </citation>
    <scope>NUCLEOTIDE SEQUENCE [GENOMIC DNA]</scope>
    <scope>VARIANTS ILE-20 AND SER-201</scope>
</reference>
<reference key="2">
    <citation type="journal article" date="1997" name="Yeast">
        <title>Sequence analysis of 203 kilobases from Saccharomyces cerevisiae chromosome VII.</title>
        <authorList>
            <person name="Rieger M."/>
            <person name="Brueckner M."/>
            <person name="Schaefer M."/>
            <person name="Mueller-Auer S."/>
        </authorList>
    </citation>
    <scope>NUCLEOTIDE SEQUENCE [GENOMIC DNA]</scope>
    <source>
        <strain>ATCC 204508 / S288c</strain>
    </source>
</reference>
<reference key="3">
    <citation type="journal article" date="1997" name="Nature">
        <title>The nucleotide sequence of Saccharomyces cerevisiae chromosome VII.</title>
        <authorList>
            <person name="Tettelin H."/>
            <person name="Agostoni-Carbone M.L."/>
            <person name="Albermann K."/>
            <person name="Albers M."/>
            <person name="Arroyo J."/>
            <person name="Backes U."/>
            <person name="Barreiros T."/>
            <person name="Bertani I."/>
            <person name="Bjourson A.J."/>
            <person name="Brueckner M."/>
            <person name="Bruschi C.V."/>
            <person name="Carignani G."/>
            <person name="Castagnoli L."/>
            <person name="Cerdan E."/>
            <person name="Clemente M.L."/>
            <person name="Coblenz A."/>
            <person name="Coglievina M."/>
            <person name="Coissac E."/>
            <person name="Defoor E."/>
            <person name="Del Bino S."/>
            <person name="Delius H."/>
            <person name="Delneri D."/>
            <person name="de Wergifosse P."/>
            <person name="Dujon B."/>
            <person name="Durand P."/>
            <person name="Entian K.-D."/>
            <person name="Eraso P."/>
            <person name="Escribano V."/>
            <person name="Fabiani L."/>
            <person name="Fartmann B."/>
            <person name="Feroli F."/>
            <person name="Feuermann M."/>
            <person name="Frontali L."/>
            <person name="Garcia-Gonzalez M."/>
            <person name="Garcia-Saez M.I."/>
            <person name="Goffeau A."/>
            <person name="Guerreiro P."/>
            <person name="Hani J."/>
            <person name="Hansen M."/>
            <person name="Hebling U."/>
            <person name="Hernandez K."/>
            <person name="Heumann K."/>
            <person name="Hilger F."/>
            <person name="Hofmann B."/>
            <person name="Indge K.J."/>
            <person name="James C.M."/>
            <person name="Klima R."/>
            <person name="Koetter P."/>
            <person name="Kramer B."/>
            <person name="Kramer W."/>
            <person name="Lauquin G."/>
            <person name="Leuther H."/>
            <person name="Louis E.J."/>
            <person name="Maillier E."/>
            <person name="Marconi A."/>
            <person name="Martegani E."/>
            <person name="Mazon M.J."/>
            <person name="Mazzoni C."/>
            <person name="McReynolds A.D.K."/>
            <person name="Melchioretto P."/>
            <person name="Mewes H.-W."/>
            <person name="Minenkova O."/>
            <person name="Mueller-Auer S."/>
            <person name="Nawrocki A."/>
            <person name="Netter P."/>
            <person name="Neu R."/>
            <person name="Nombela C."/>
            <person name="Oliver S.G."/>
            <person name="Panzeri L."/>
            <person name="Paoluzi S."/>
            <person name="Plevani P."/>
            <person name="Portetelle D."/>
            <person name="Portillo F."/>
            <person name="Potier S."/>
            <person name="Purnelle B."/>
            <person name="Rieger M."/>
            <person name="Riles L."/>
            <person name="Rinaldi T."/>
            <person name="Robben J."/>
            <person name="Rodrigues-Pousada C."/>
            <person name="Rodriguez-Belmonte E."/>
            <person name="Rodriguez-Torres A.M."/>
            <person name="Rose M."/>
            <person name="Ruzzi M."/>
            <person name="Saliola M."/>
            <person name="Sanchez-Perez M."/>
            <person name="Schaefer B."/>
            <person name="Schaefer M."/>
            <person name="Scharfe M."/>
            <person name="Schmidheini T."/>
            <person name="Schreer A."/>
            <person name="Skala J."/>
            <person name="Souciet J.-L."/>
            <person name="Steensma H.Y."/>
            <person name="Talla E."/>
            <person name="Thierry A."/>
            <person name="Vandenbol M."/>
            <person name="van der Aart Q.J.M."/>
            <person name="Van Dyck L."/>
            <person name="Vanoni M."/>
            <person name="Verhasselt P."/>
            <person name="Voet M."/>
            <person name="Volckaert G."/>
            <person name="Wambutt R."/>
            <person name="Watson M.D."/>
            <person name="Weber N."/>
            <person name="Wedler E."/>
            <person name="Wedler H."/>
            <person name="Wipfli P."/>
            <person name="Wolf K."/>
            <person name="Wright L.F."/>
            <person name="Zaccaria P."/>
            <person name="Zimmermann M."/>
            <person name="Zollner A."/>
            <person name="Kleine K."/>
        </authorList>
    </citation>
    <scope>NUCLEOTIDE SEQUENCE [LARGE SCALE GENOMIC DNA]</scope>
    <source>
        <strain>ATCC 204508 / S288c</strain>
    </source>
</reference>
<reference key="4">
    <citation type="journal article" date="2014" name="G3 (Bethesda)">
        <title>The reference genome sequence of Saccharomyces cerevisiae: Then and now.</title>
        <authorList>
            <person name="Engel S.R."/>
            <person name="Dietrich F.S."/>
            <person name="Fisk D.G."/>
            <person name="Binkley G."/>
            <person name="Balakrishnan R."/>
            <person name="Costanzo M.C."/>
            <person name="Dwight S.S."/>
            <person name="Hitz B.C."/>
            <person name="Karra K."/>
            <person name="Nash R.S."/>
            <person name="Weng S."/>
            <person name="Wong E.D."/>
            <person name="Lloyd P."/>
            <person name="Skrzypek M.S."/>
            <person name="Miyasato S.R."/>
            <person name="Simison M."/>
            <person name="Cherry J.M."/>
        </authorList>
    </citation>
    <scope>GENOME REANNOTATION</scope>
    <source>
        <strain>ATCC 204508 / S288c</strain>
    </source>
</reference>
<reference key="5">
    <citation type="journal article" date="2003" name="Nature">
        <title>Global analysis of protein localization in budding yeast.</title>
        <authorList>
            <person name="Huh W.-K."/>
            <person name="Falvo J.V."/>
            <person name="Gerke L.C."/>
            <person name="Carroll A.S."/>
            <person name="Howson R.W."/>
            <person name="Weissman J.S."/>
            <person name="O'Shea E.K."/>
        </authorList>
    </citation>
    <scope>SUBCELLULAR LOCATION [LARGE SCALE ANALYSIS]</scope>
</reference>
<reference key="6">
    <citation type="journal article" date="2003" name="Nature">
        <title>Global analysis of protein expression in yeast.</title>
        <authorList>
            <person name="Ghaemmaghami S."/>
            <person name="Huh W.-K."/>
            <person name="Bower K."/>
            <person name="Howson R.W."/>
            <person name="Belle A."/>
            <person name="Dephoure N."/>
            <person name="O'Shea E.K."/>
            <person name="Weissman J.S."/>
        </authorList>
    </citation>
    <scope>LEVEL OF PROTEIN EXPRESSION [LARGE SCALE ANALYSIS]</scope>
</reference>
<reference key="7">
    <citation type="journal article" date="2003" name="Proc. Natl. Acad. Sci. U.S.A.">
        <title>Predicting protein functions from redundancies in large-scale protein interaction networks.</title>
        <authorList>
            <person name="Samanta M.P."/>
            <person name="Liang S."/>
        </authorList>
    </citation>
    <scope>FUNCTION</scope>
</reference>
<reference key="8">
    <citation type="journal article" date="2006" name="Cell">
        <title>Downregulation of PP2A(Cdc55) phosphatase by separase initiates mitotic exit in budding yeast.</title>
        <authorList>
            <person name="Queralt E."/>
            <person name="Lehane C."/>
            <person name="Novak B."/>
            <person name="Uhlmann F."/>
        </authorList>
    </citation>
    <scope>FUNCTION</scope>
</reference>
<reference key="9">
    <citation type="journal article" date="2008" name="Mol. Cell. Proteomics">
        <title>A multidimensional chromatography technology for in-depth phosphoproteome analysis.</title>
        <authorList>
            <person name="Albuquerque C.P."/>
            <person name="Smolka M.B."/>
            <person name="Payne S.H."/>
            <person name="Bafna V."/>
            <person name="Eng J."/>
            <person name="Zhou H."/>
        </authorList>
    </citation>
    <scope>PHOSPHORYLATION [LARGE SCALE ANALYSIS] AT SER-192</scope>
    <scope>IDENTIFICATION BY MASS SPECTROMETRY [LARGE SCALE ANALYSIS]</scope>
</reference>
<reference key="10">
    <citation type="journal article" date="2009" name="Science">
        <title>Global analysis of Cdk1 substrate phosphorylation sites provides insights into evolution.</title>
        <authorList>
            <person name="Holt L.J."/>
            <person name="Tuch B.B."/>
            <person name="Villen J."/>
            <person name="Johnson A.D."/>
            <person name="Gygi S.P."/>
            <person name="Morgan D.O."/>
        </authorList>
    </citation>
    <scope>PHOSPHORYLATION [LARGE SCALE ANALYSIS] AT SER-172; SER-214 AND SER-238</scope>
    <scope>IDENTIFICATION BY MASS SPECTROMETRY [LARGE SCALE ANALYSIS]</scope>
</reference>
<reference key="11">
    <citation type="journal article" date="2011" name="Yeast">
        <title>Identification of phosphatase 2A-like Sit4-mediated signalling and ubiquitin-dependent protein sorting as modulators of caffeine sensitivity in S. cerevisiae.</title>
        <authorList>
            <person name="Hood-DeGrenier J.K."/>
        </authorList>
    </citation>
    <scope>FUNCTION</scope>
</reference>
<feature type="chain" id="PRO_0000202835" description="Protein phosphatase type 2A regulatory subunit RTS3">
    <location>
        <begin position="1"/>
        <end position="263"/>
    </location>
</feature>
<feature type="region of interest" description="Disordered" evidence="1">
    <location>
        <begin position="1"/>
        <end position="62"/>
    </location>
</feature>
<feature type="region of interest" description="Disordered" evidence="1">
    <location>
        <begin position="149"/>
        <end position="176"/>
    </location>
</feature>
<feature type="compositionally biased region" description="Low complexity" evidence="1">
    <location>
        <begin position="46"/>
        <end position="61"/>
    </location>
</feature>
<feature type="modified residue" description="Phosphoserine" evidence="9">
    <location>
        <position position="172"/>
    </location>
</feature>
<feature type="modified residue" description="Phosphoserine" evidence="8">
    <location>
        <position position="192"/>
    </location>
</feature>
<feature type="modified residue" description="Phosphoserine" evidence="9">
    <location>
        <position position="214"/>
    </location>
</feature>
<feature type="modified residue" description="Phosphoserine" evidence="9">
    <location>
        <position position="238"/>
    </location>
</feature>
<feature type="sequence variant" evidence="7">
    <original>V</original>
    <variation>I</variation>
    <location>
        <position position="20"/>
    </location>
</feature>
<feature type="sequence variant" evidence="7">
    <original>P</original>
    <variation>S</variation>
    <location>
        <position position="201"/>
    </location>
</feature>
<sequence>MIATSRAVNMNKESKHKKAVAKPCRERQTSVTRAMRPAVARDPRRLSTSSSPSSSPMSAQRRLSREEIINEMEKEQDAIVVRLLREIETLKEENSRLKNQLHHPVPARRSSPFFEGESAILDDDDCNYGYTLDTPKLKLTDGASRHTVLPLTPKDSMTHISHSARRSSRNASISNGTSISDTIFPIETKIHSAPTTNRNLPSADLPHHTLLPRSLSGISSSDLTESGALLHDRRRRSSNYSLDGSNSLKADLMAKRFQTGSLK</sequence>
<comment type="function">
    <text evidence="4 5 6">May be a component of a protein phosphatase type 2A (PP2A) complex. Negatively regulates SIT4 phosphatase, a modulators of caffeine sensitivity.</text>
</comment>
<comment type="subcellular location">
    <subcellularLocation>
        <location evidence="2">Cytoplasm</location>
    </subcellularLocation>
    <subcellularLocation>
        <location evidence="2">Nucleus</location>
    </subcellularLocation>
</comment>
<comment type="miscellaneous">
    <text evidence="3">Present with 2100 molecules/cell in log phase SD medium.</text>
</comment>
<keyword id="KW-0963">Cytoplasm</keyword>
<keyword id="KW-0539">Nucleus</keyword>
<keyword id="KW-0597">Phosphoprotein</keyword>
<keyword id="KW-1185">Reference proteome</keyword>
<protein>
    <recommendedName>
        <fullName>Protein phosphatase type 2A regulatory subunit RTS3</fullName>
    </recommendedName>
</protein>
<dbReference type="EMBL" id="AY301067">
    <property type="protein sequence ID" value="AAP48998.1"/>
    <property type="molecule type" value="Genomic_DNA"/>
</dbReference>
<dbReference type="EMBL" id="Z72946">
    <property type="protein sequence ID" value="CAA97175.1"/>
    <property type="molecule type" value="Genomic_DNA"/>
</dbReference>
<dbReference type="EMBL" id="BK006941">
    <property type="protein sequence ID" value="DAA08251.1"/>
    <property type="molecule type" value="Genomic_DNA"/>
</dbReference>
<dbReference type="PIR" id="S64472">
    <property type="entry name" value="S64472"/>
</dbReference>
<dbReference type="RefSeq" id="NP_011677.3">
    <property type="nucleotide sequence ID" value="NM_001181290.3"/>
</dbReference>
<dbReference type="SMR" id="P53289"/>
<dbReference type="BioGRID" id="33408">
    <property type="interactions" value="116"/>
</dbReference>
<dbReference type="DIP" id="DIP-6319N"/>
<dbReference type="FunCoup" id="P53289">
    <property type="interactions" value="222"/>
</dbReference>
<dbReference type="IntAct" id="P53289">
    <property type="interactions" value="16"/>
</dbReference>
<dbReference type="MINT" id="P53289"/>
<dbReference type="STRING" id="4932.YGR161C"/>
<dbReference type="iPTMnet" id="P53289"/>
<dbReference type="PaxDb" id="4932-YGR161C"/>
<dbReference type="PeptideAtlas" id="P53289"/>
<dbReference type="EnsemblFungi" id="YGR161C_mRNA">
    <property type="protein sequence ID" value="YGR161C"/>
    <property type="gene ID" value="YGR161C"/>
</dbReference>
<dbReference type="GeneID" id="853065"/>
<dbReference type="KEGG" id="sce:YGR161C"/>
<dbReference type="AGR" id="SGD:S000003393"/>
<dbReference type="SGD" id="S000003393">
    <property type="gene designation" value="RTS3"/>
</dbReference>
<dbReference type="VEuPathDB" id="FungiDB:YGR161C"/>
<dbReference type="eggNOG" id="ENOG502SBUT">
    <property type="taxonomic scope" value="Eukaryota"/>
</dbReference>
<dbReference type="HOGENOM" id="CLU_1058272_0_0_1"/>
<dbReference type="InParanoid" id="P53289"/>
<dbReference type="OrthoDB" id="4026704at2759"/>
<dbReference type="BioCyc" id="YEAST:G3O-30860-MONOMER"/>
<dbReference type="BioGRID-ORCS" id="853065">
    <property type="hits" value="6 hits in 10 CRISPR screens"/>
</dbReference>
<dbReference type="PRO" id="PR:P53289"/>
<dbReference type="Proteomes" id="UP000002311">
    <property type="component" value="Chromosome VII"/>
</dbReference>
<dbReference type="RNAct" id="P53289">
    <property type="molecule type" value="protein"/>
</dbReference>
<dbReference type="GO" id="GO:0005737">
    <property type="term" value="C:cytoplasm"/>
    <property type="evidence" value="ECO:0007005"/>
    <property type="project" value="SGD"/>
</dbReference>
<dbReference type="GO" id="GO:0005634">
    <property type="term" value="C:nucleus"/>
    <property type="evidence" value="ECO:0007005"/>
    <property type="project" value="SGD"/>
</dbReference>
<accession>P53289</accession>
<accession>D6VUU0</accession>
<accession>Q7ZA12</accession>
<name>RTS3_YEAST</name>
<gene>
    <name type="primary">RTS3</name>
    <name type="ordered locus">YGR161C</name>
</gene>
<proteinExistence type="evidence at protein level"/>
<organism>
    <name type="scientific">Saccharomyces cerevisiae (strain ATCC 204508 / S288c)</name>
    <name type="common">Baker's yeast</name>
    <dbReference type="NCBI Taxonomy" id="559292"/>
    <lineage>
        <taxon>Eukaryota</taxon>
        <taxon>Fungi</taxon>
        <taxon>Dikarya</taxon>
        <taxon>Ascomycota</taxon>
        <taxon>Saccharomycotina</taxon>
        <taxon>Saccharomycetes</taxon>
        <taxon>Saccharomycetales</taxon>
        <taxon>Saccharomycetaceae</taxon>
        <taxon>Saccharomyces</taxon>
    </lineage>
</organism>
<evidence type="ECO:0000256" key="1">
    <source>
        <dbReference type="SAM" id="MobiDB-lite"/>
    </source>
</evidence>
<evidence type="ECO:0000269" key="2">
    <source>
    </source>
</evidence>
<evidence type="ECO:0000269" key="3">
    <source>
    </source>
</evidence>
<evidence type="ECO:0000269" key="4">
    <source>
    </source>
</evidence>
<evidence type="ECO:0000269" key="5">
    <source>
    </source>
</evidence>
<evidence type="ECO:0000269" key="6">
    <source>
    </source>
</evidence>
<evidence type="ECO:0000269" key="7">
    <source ref="1"/>
</evidence>
<evidence type="ECO:0007744" key="8">
    <source>
    </source>
</evidence>
<evidence type="ECO:0007744" key="9">
    <source>
    </source>
</evidence>